<evidence type="ECO:0000255" key="1">
    <source>
        <dbReference type="HAMAP-Rule" id="MF_01365"/>
    </source>
</evidence>
<evidence type="ECO:0000305" key="2"/>
<name>RL6_SODGM</name>
<proteinExistence type="inferred from homology"/>
<gene>
    <name evidence="1" type="primary">rplF</name>
    <name type="ordered locus">SG2263</name>
</gene>
<feature type="chain" id="PRO_0000265301" description="Large ribosomal subunit protein uL6">
    <location>
        <begin position="1"/>
        <end position="177"/>
    </location>
</feature>
<reference key="1">
    <citation type="journal article" date="2006" name="Genome Res.">
        <title>Massive genome erosion and functional adaptations provide insights into the symbiotic lifestyle of Sodalis glossinidius in the tsetse host.</title>
        <authorList>
            <person name="Toh H."/>
            <person name="Weiss B.L."/>
            <person name="Perkin S.A.H."/>
            <person name="Yamashita A."/>
            <person name="Oshima K."/>
            <person name="Hattori M."/>
            <person name="Aksoy S."/>
        </authorList>
    </citation>
    <scope>NUCLEOTIDE SEQUENCE [LARGE SCALE GENOMIC DNA]</scope>
    <source>
        <strain>morsitans</strain>
    </source>
</reference>
<comment type="function">
    <text evidence="1">This protein binds to the 23S rRNA, and is important in its secondary structure. It is located near the subunit interface in the base of the L7/L12 stalk, and near the tRNA binding site of the peptidyltransferase center.</text>
</comment>
<comment type="subunit">
    <text evidence="1">Part of the 50S ribosomal subunit.</text>
</comment>
<comment type="similarity">
    <text evidence="1">Belongs to the universal ribosomal protein uL6 family.</text>
</comment>
<organism>
    <name type="scientific">Sodalis glossinidius (strain morsitans)</name>
    <dbReference type="NCBI Taxonomy" id="343509"/>
    <lineage>
        <taxon>Bacteria</taxon>
        <taxon>Pseudomonadati</taxon>
        <taxon>Pseudomonadota</taxon>
        <taxon>Gammaproteobacteria</taxon>
        <taxon>Enterobacterales</taxon>
        <taxon>Bruguierivoracaceae</taxon>
        <taxon>Sodalis</taxon>
    </lineage>
</organism>
<dbReference type="EMBL" id="AP008232">
    <property type="protein sequence ID" value="BAE75538.1"/>
    <property type="molecule type" value="Genomic_DNA"/>
</dbReference>
<dbReference type="RefSeq" id="WP_011412073.1">
    <property type="nucleotide sequence ID" value="NC_007712.1"/>
</dbReference>
<dbReference type="SMR" id="Q2NQN7"/>
<dbReference type="STRING" id="343509.SG2263"/>
<dbReference type="KEGG" id="sgl:SG2263"/>
<dbReference type="eggNOG" id="COG0097">
    <property type="taxonomic scope" value="Bacteria"/>
</dbReference>
<dbReference type="HOGENOM" id="CLU_065464_1_2_6"/>
<dbReference type="OrthoDB" id="9805007at2"/>
<dbReference type="Proteomes" id="UP000001932">
    <property type="component" value="Chromosome"/>
</dbReference>
<dbReference type="GO" id="GO:0022625">
    <property type="term" value="C:cytosolic large ribosomal subunit"/>
    <property type="evidence" value="ECO:0007669"/>
    <property type="project" value="TreeGrafter"/>
</dbReference>
<dbReference type="GO" id="GO:0019843">
    <property type="term" value="F:rRNA binding"/>
    <property type="evidence" value="ECO:0007669"/>
    <property type="project" value="UniProtKB-UniRule"/>
</dbReference>
<dbReference type="GO" id="GO:0003735">
    <property type="term" value="F:structural constituent of ribosome"/>
    <property type="evidence" value="ECO:0007669"/>
    <property type="project" value="InterPro"/>
</dbReference>
<dbReference type="GO" id="GO:0002181">
    <property type="term" value="P:cytoplasmic translation"/>
    <property type="evidence" value="ECO:0007669"/>
    <property type="project" value="TreeGrafter"/>
</dbReference>
<dbReference type="FunFam" id="3.90.930.12:FF:000001">
    <property type="entry name" value="50S ribosomal protein L6"/>
    <property type="match status" value="1"/>
</dbReference>
<dbReference type="FunFam" id="3.90.930.12:FF:000002">
    <property type="entry name" value="50S ribosomal protein L6"/>
    <property type="match status" value="1"/>
</dbReference>
<dbReference type="Gene3D" id="3.90.930.12">
    <property type="entry name" value="Ribosomal protein L6, alpha-beta domain"/>
    <property type="match status" value="2"/>
</dbReference>
<dbReference type="HAMAP" id="MF_01365_B">
    <property type="entry name" value="Ribosomal_uL6_B"/>
    <property type="match status" value="1"/>
</dbReference>
<dbReference type="InterPro" id="IPR000702">
    <property type="entry name" value="Ribosomal_uL6-like"/>
</dbReference>
<dbReference type="InterPro" id="IPR036789">
    <property type="entry name" value="Ribosomal_uL6-like_a/b-dom_sf"/>
</dbReference>
<dbReference type="InterPro" id="IPR020040">
    <property type="entry name" value="Ribosomal_uL6_a/b-dom"/>
</dbReference>
<dbReference type="InterPro" id="IPR019906">
    <property type="entry name" value="Ribosomal_uL6_bac-type"/>
</dbReference>
<dbReference type="InterPro" id="IPR002358">
    <property type="entry name" value="Ribosomal_uL6_CS"/>
</dbReference>
<dbReference type="NCBIfam" id="TIGR03654">
    <property type="entry name" value="L6_bact"/>
    <property type="match status" value="1"/>
</dbReference>
<dbReference type="PANTHER" id="PTHR11655">
    <property type="entry name" value="60S/50S RIBOSOMAL PROTEIN L6/L9"/>
    <property type="match status" value="1"/>
</dbReference>
<dbReference type="PANTHER" id="PTHR11655:SF14">
    <property type="entry name" value="LARGE RIBOSOMAL SUBUNIT PROTEIN UL6M"/>
    <property type="match status" value="1"/>
</dbReference>
<dbReference type="Pfam" id="PF00347">
    <property type="entry name" value="Ribosomal_L6"/>
    <property type="match status" value="2"/>
</dbReference>
<dbReference type="PIRSF" id="PIRSF002162">
    <property type="entry name" value="Ribosomal_L6"/>
    <property type="match status" value="1"/>
</dbReference>
<dbReference type="PRINTS" id="PR00059">
    <property type="entry name" value="RIBOSOMALL6"/>
</dbReference>
<dbReference type="SUPFAM" id="SSF56053">
    <property type="entry name" value="Ribosomal protein L6"/>
    <property type="match status" value="2"/>
</dbReference>
<dbReference type="PROSITE" id="PS00525">
    <property type="entry name" value="RIBOSOMAL_L6_1"/>
    <property type="match status" value="1"/>
</dbReference>
<protein>
    <recommendedName>
        <fullName evidence="1">Large ribosomal subunit protein uL6</fullName>
    </recommendedName>
    <alternativeName>
        <fullName evidence="2">50S ribosomal protein L6</fullName>
    </alternativeName>
</protein>
<accession>Q2NQN7</accession>
<sequence>MSRVAKAPVVIPAGVEVKLNGQVISIKGKNGELTRTIHEAVDVQHADNQLSFAPREGHANGWALAGTTRALLNGMVIGVTDGFTKKLQLVGVGYRAAVKGNVVNLSLGFSHPIDHQLPAGITAECPSQTEIVLKGADKQIIGQVAADLRAYRRPEPYKGKGVRYADEVVRTKEAKKK</sequence>
<keyword id="KW-0687">Ribonucleoprotein</keyword>
<keyword id="KW-0689">Ribosomal protein</keyword>
<keyword id="KW-0694">RNA-binding</keyword>
<keyword id="KW-0699">rRNA-binding</keyword>